<comment type="function">
    <text evidence="1">Minor envelope protein. May function as a viroporin in the virion envelope that facilitates uncoating of the virus in order to release the genomic RNA into the cytoplasm for subsequent replication (By similarity).</text>
</comment>
<comment type="subunit">
    <text evidence="1">Homooligomer (By similarity). Associates with itself into higher-order structures, including dimers, trimers and tetramers. Associates with the GP2b-GP3-GP4 complex (By similarity).</text>
</comment>
<comment type="subcellular location">
    <subcellularLocation>
        <location evidence="1">Virion membrane</location>
        <topology evidence="1">Single-pass type I membrane protein</topology>
    </subcellularLocation>
    <subcellularLocation>
        <location evidence="3">Host endoplasmic reticulum membrane</location>
        <topology evidence="3">Single-pass type I membrane protein</topology>
    </subcellularLocation>
    <subcellularLocation>
        <location evidence="3">Host Golgi apparatus membrane</location>
        <topology evidence="3">Single-pass type I membrane protein</topology>
    </subcellularLocation>
    <subcellularLocation>
        <location evidence="1">Secreted</location>
    </subcellularLocation>
</comment>
<comment type="PTM">
    <text evidence="1">Myristoylated.</text>
</comment>
<comment type="PTM">
    <text evidence="1">Not glycosylated.</text>
</comment>
<comment type="similarity">
    <text evidence="4">Belongs to the arteriviridae E protein family.</text>
</comment>
<sequence>MGSLWSKISQLFVDAFTEFLVSVVDIVIFLAILFGFTVAGWLLVFLLRVVCSALLRSRSAIHSPELSKVL</sequence>
<proteinExistence type="evidence at protein level"/>
<feature type="initiator methionine" description="Removed" evidence="2">
    <location>
        <position position="1"/>
    </location>
</feature>
<feature type="chain" id="PRO_0000410886" description="Envelope small membrane protein">
    <location>
        <begin position="2"/>
        <end position="70"/>
    </location>
</feature>
<feature type="topological domain" description="Virion surface" evidence="5">
    <location>
        <begin position="2"/>
        <end position="25"/>
    </location>
</feature>
<feature type="transmembrane region" description="Helical" evidence="2">
    <location>
        <begin position="26"/>
        <end position="46"/>
    </location>
</feature>
<feature type="topological domain" description="Intravirion" evidence="5">
    <location>
        <begin position="47"/>
        <end position="70"/>
    </location>
</feature>
<feature type="region of interest" description="Endoplasmic reticulum retention signal" evidence="2">
    <location>
        <begin position="2"/>
        <end position="15"/>
    </location>
</feature>
<feature type="lipid moiety-binding region" description="N-myristoyl glycine; by host" evidence="1">
    <location>
        <position position="2"/>
    </location>
</feature>
<evidence type="ECO:0000250" key="1"/>
<evidence type="ECO:0000255" key="2"/>
<evidence type="ECO:0000269" key="3">
    <source>
    </source>
</evidence>
<evidence type="ECO:0000305" key="4"/>
<evidence type="ECO:0000305" key="5">
    <source>
    </source>
</evidence>
<organismHost>
    <name type="scientific">Sus scrofa</name>
    <name type="common">Pig</name>
    <dbReference type="NCBI Taxonomy" id="9823"/>
</organismHost>
<organism>
    <name type="scientific">Porcine reproductive and respiratory syndrome virus (isolate Pig/United States/SD 01-08/2001)</name>
    <name type="common">PRRSV</name>
    <dbReference type="NCBI Taxonomy" id="857306"/>
    <lineage>
        <taxon>Viruses</taxon>
        <taxon>Riboviria</taxon>
        <taxon>Orthornavirae</taxon>
        <taxon>Pisuviricota</taxon>
        <taxon>Pisoniviricetes</taxon>
        <taxon>Nidovirales</taxon>
        <taxon>Arnidovirineae</taxon>
        <taxon>Arteriviridae</taxon>
        <taxon>Variarterivirinae</taxon>
        <taxon>Betaarterivirus</taxon>
        <taxon>Ampobartevirus</taxon>
        <taxon>Betaarterivirus americense</taxon>
    </lineage>
</organism>
<gene>
    <name type="primary">GP2b</name>
    <name type="ORF">2b</name>
</gene>
<reference key="1">
    <citation type="journal article" date="2006" name="Adv. Exp. Med. Biol.">
        <title>Construction of a full-length cDNA infectious clone of a European-like Type 1 PRRSV isolated in the U.S.</title>
        <authorList>
            <person name="Fang Y."/>
            <person name="Faaberg K.S."/>
            <person name="Rowland R.R."/>
            <person name="Christopher-Hennings J."/>
            <person name="Pattnaik A.K."/>
            <person name="Osorio F."/>
            <person name="Nelson E.A."/>
        </authorList>
    </citation>
    <scope>NUCLEOTIDE SEQUENCE [GENOMIC RNA]</scope>
    <source>
        <strain>Infectious clone SD 01-08</strain>
    </source>
</reference>
<reference key="2">
    <citation type="journal article" date="2010" name="Virus Res.">
        <title>Subcellular localization and topology of porcine reproductive and respiratory syndrome virus E protein.</title>
        <authorList>
            <person name="Yu M."/>
            <person name="Liu X."/>
            <person name="Sun L."/>
            <person name="Chen C."/>
            <person name="Ma G."/>
            <person name="Kitamura Y."/>
            <person name="Gao G.F."/>
            <person name="Liu W."/>
        </authorList>
    </citation>
    <scope>TOPOLOGY</scope>
    <scope>SUBCELLULAR LOCATION</scope>
    <source>
        <strain>VR-2332</strain>
    </source>
</reference>
<protein>
    <recommendedName>
        <fullName>Envelope small membrane protein</fullName>
        <shortName>Protein E</shortName>
    </recommendedName>
    <alternativeName>
        <fullName>Glycoprotein 2b</fullName>
        <shortName>Protein GP2b</shortName>
    </alternativeName>
    <alternativeName>
        <fullName>Gs</fullName>
    </alternativeName>
</protein>
<accession>A0MD31</accession>
<name>E_PRRSS</name>
<keyword id="KW-0325">Glycoprotein</keyword>
<keyword id="KW-1038">Host endoplasmic reticulum</keyword>
<keyword id="KW-1040">Host Golgi apparatus</keyword>
<keyword id="KW-1043">Host membrane</keyword>
<keyword id="KW-0407">Ion channel</keyword>
<keyword id="KW-0406">Ion transport</keyword>
<keyword id="KW-0449">Lipoprotein</keyword>
<keyword id="KW-0472">Membrane</keyword>
<keyword id="KW-0519">Myristate</keyword>
<keyword id="KW-0964">Secreted</keyword>
<keyword id="KW-0812">Transmembrane</keyword>
<keyword id="KW-1133">Transmembrane helix</keyword>
<keyword id="KW-0813">Transport</keyword>
<keyword id="KW-0261">Viral envelope protein</keyword>
<keyword id="KW-1182">Viral ion channel</keyword>
<keyword id="KW-0946">Virion</keyword>
<dbReference type="EMBL" id="DQ489311">
    <property type="protein sequence ID" value="ABF66343.1"/>
    <property type="molecule type" value="Genomic_RNA"/>
</dbReference>
<dbReference type="SMR" id="A0MD31"/>
<dbReference type="Proteomes" id="UP000000937">
    <property type="component" value="Genome"/>
</dbReference>
<dbReference type="GO" id="GO:0005576">
    <property type="term" value="C:extracellular region"/>
    <property type="evidence" value="ECO:0007669"/>
    <property type="project" value="UniProtKB-SubCell"/>
</dbReference>
<dbReference type="GO" id="GO:0044167">
    <property type="term" value="C:host cell endoplasmic reticulum membrane"/>
    <property type="evidence" value="ECO:0007669"/>
    <property type="project" value="UniProtKB-SubCell"/>
</dbReference>
<dbReference type="GO" id="GO:0044178">
    <property type="term" value="C:host cell Golgi membrane"/>
    <property type="evidence" value="ECO:0007669"/>
    <property type="project" value="UniProtKB-SubCell"/>
</dbReference>
<dbReference type="GO" id="GO:0016020">
    <property type="term" value="C:membrane"/>
    <property type="evidence" value="ECO:0007669"/>
    <property type="project" value="UniProtKB-KW"/>
</dbReference>
<dbReference type="GO" id="GO:0019031">
    <property type="term" value="C:viral envelope"/>
    <property type="evidence" value="ECO:0007669"/>
    <property type="project" value="UniProtKB-KW"/>
</dbReference>
<dbReference type="GO" id="GO:0055036">
    <property type="term" value="C:virion membrane"/>
    <property type="evidence" value="ECO:0007669"/>
    <property type="project" value="UniProtKB-SubCell"/>
</dbReference>
<dbReference type="GO" id="GO:0015267">
    <property type="term" value="F:channel activity"/>
    <property type="evidence" value="ECO:0007669"/>
    <property type="project" value="UniProtKB-KW"/>
</dbReference>
<dbReference type="GO" id="GO:0034220">
    <property type="term" value="P:monoatomic ion transmembrane transport"/>
    <property type="evidence" value="ECO:0007669"/>
    <property type="project" value="UniProtKB-KW"/>
</dbReference>
<dbReference type="InterPro" id="IPR009775">
    <property type="entry name" value="GP2b"/>
</dbReference>
<dbReference type="Pfam" id="PF07069">
    <property type="entry name" value="PRRSV_2b"/>
    <property type="match status" value="1"/>
</dbReference>